<reference key="1">
    <citation type="submission" date="1998-12" db="EMBL/GenBank/DDBJ databases">
        <authorList>
            <person name="Jimenez J."/>
        </authorList>
    </citation>
    <scope>NUCLEOTIDE SEQUENCE [GENOMIC DNA]</scope>
</reference>
<reference key="2">
    <citation type="journal article" date="2002" name="Nature">
        <title>The genome sequence of Schizosaccharomyces pombe.</title>
        <authorList>
            <person name="Wood V."/>
            <person name="Gwilliam R."/>
            <person name="Rajandream M.A."/>
            <person name="Lyne M.H."/>
            <person name="Lyne R."/>
            <person name="Stewart A."/>
            <person name="Sgouros J.G."/>
            <person name="Peat N."/>
            <person name="Hayles J."/>
            <person name="Baker S.G."/>
            <person name="Basham D."/>
            <person name="Bowman S."/>
            <person name="Brooks K."/>
            <person name="Brown D."/>
            <person name="Brown S."/>
            <person name="Chillingworth T."/>
            <person name="Churcher C.M."/>
            <person name="Collins M."/>
            <person name="Connor R."/>
            <person name="Cronin A."/>
            <person name="Davis P."/>
            <person name="Feltwell T."/>
            <person name="Fraser A."/>
            <person name="Gentles S."/>
            <person name="Goble A."/>
            <person name="Hamlin N."/>
            <person name="Harris D.E."/>
            <person name="Hidalgo J."/>
            <person name="Hodgson G."/>
            <person name="Holroyd S."/>
            <person name="Hornsby T."/>
            <person name="Howarth S."/>
            <person name="Huckle E.J."/>
            <person name="Hunt S."/>
            <person name="Jagels K."/>
            <person name="James K.D."/>
            <person name="Jones L."/>
            <person name="Jones M."/>
            <person name="Leather S."/>
            <person name="McDonald S."/>
            <person name="McLean J."/>
            <person name="Mooney P."/>
            <person name="Moule S."/>
            <person name="Mungall K.L."/>
            <person name="Murphy L.D."/>
            <person name="Niblett D."/>
            <person name="Odell C."/>
            <person name="Oliver K."/>
            <person name="O'Neil S."/>
            <person name="Pearson D."/>
            <person name="Quail M.A."/>
            <person name="Rabbinowitsch E."/>
            <person name="Rutherford K.M."/>
            <person name="Rutter S."/>
            <person name="Saunders D."/>
            <person name="Seeger K."/>
            <person name="Sharp S."/>
            <person name="Skelton J."/>
            <person name="Simmonds M.N."/>
            <person name="Squares R."/>
            <person name="Squares S."/>
            <person name="Stevens K."/>
            <person name="Taylor K."/>
            <person name="Taylor R.G."/>
            <person name="Tivey A."/>
            <person name="Walsh S.V."/>
            <person name="Warren T."/>
            <person name="Whitehead S."/>
            <person name="Woodward J.R."/>
            <person name="Volckaert G."/>
            <person name="Aert R."/>
            <person name="Robben J."/>
            <person name="Grymonprez B."/>
            <person name="Weltjens I."/>
            <person name="Vanstreels E."/>
            <person name="Rieger M."/>
            <person name="Schaefer M."/>
            <person name="Mueller-Auer S."/>
            <person name="Gabel C."/>
            <person name="Fuchs M."/>
            <person name="Duesterhoeft A."/>
            <person name="Fritzc C."/>
            <person name="Holzer E."/>
            <person name="Moestl D."/>
            <person name="Hilbert H."/>
            <person name="Borzym K."/>
            <person name="Langer I."/>
            <person name="Beck A."/>
            <person name="Lehrach H."/>
            <person name="Reinhardt R."/>
            <person name="Pohl T.M."/>
            <person name="Eger P."/>
            <person name="Zimmermann W."/>
            <person name="Wedler H."/>
            <person name="Wambutt R."/>
            <person name="Purnelle B."/>
            <person name="Goffeau A."/>
            <person name="Cadieu E."/>
            <person name="Dreano S."/>
            <person name="Gloux S."/>
            <person name="Lelaure V."/>
            <person name="Mottier S."/>
            <person name="Galibert F."/>
            <person name="Aves S.J."/>
            <person name="Xiang Z."/>
            <person name="Hunt C."/>
            <person name="Moore K."/>
            <person name="Hurst S.M."/>
            <person name="Lucas M."/>
            <person name="Rochet M."/>
            <person name="Gaillardin C."/>
            <person name="Tallada V.A."/>
            <person name="Garzon A."/>
            <person name="Thode G."/>
            <person name="Daga R.R."/>
            <person name="Cruzado L."/>
            <person name="Jimenez J."/>
            <person name="Sanchez M."/>
            <person name="del Rey F."/>
            <person name="Benito J."/>
            <person name="Dominguez A."/>
            <person name="Revuelta J.L."/>
            <person name="Moreno S."/>
            <person name="Armstrong J."/>
            <person name="Forsburg S.L."/>
            <person name="Cerutti L."/>
            <person name="Lowe T."/>
            <person name="McCombie W.R."/>
            <person name="Paulsen I."/>
            <person name="Potashkin J."/>
            <person name="Shpakovski G.V."/>
            <person name="Ussery D."/>
            <person name="Barrell B.G."/>
            <person name="Nurse P."/>
        </authorList>
    </citation>
    <scope>NUCLEOTIDE SEQUENCE [LARGE SCALE GENOMIC DNA]</scope>
    <source>
        <strain>972 / ATCC 24843</strain>
    </source>
</reference>
<organism>
    <name type="scientific">Schizosaccharomyces pombe (strain 972 / ATCC 24843)</name>
    <name type="common">Fission yeast</name>
    <dbReference type="NCBI Taxonomy" id="284812"/>
    <lineage>
        <taxon>Eukaryota</taxon>
        <taxon>Fungi</taxon>
        <taxon>Dikarya</taxon>
        <taxon>Ascomycota</taxon>
        <taxon>Taphrinomycotina</taxon>
        <taxon>Schizosaccharomycetes</taxon>
        <taxon>Schizosaccharomycetales</taxon>
        <taxon>Schizosaccharomycetaceae</taxon>
        <taxon>Schizosaccharomyces</taxon>
    </lineage>
</organism>
<sequence>MGVVYGSQQNLSEYFYSSVNMAEVPDTFEENRGHSFEGVTLQRRHVKGMKSYGSDITPRRPKQLGLPKEVNTSECIDQGSWRKPSAFESLRSYSRKFSKRIFSFIGVESKSTVQRNASGADSTSLSHFTANEINKGNCKKTALSNEFNSANKGSKASGVGAELPSVNGFIEGELHDDNETDSFRINELAKQIQETSLGATTQEDESSDGICWDELSTTSPESSKVSEPIIQDNTQTTHINNDSSDIRFSSRCDLFADDADSDWEQDFNVKFDSPLIIPETVNSAGHTVREQLFEVKEFTRSIKDLKDLYEKANSKDIYDKDSEILGEAKAILRLADPANYSDLKDEDAQNILSKYKVKLEGDSSLDFDASMLPGLNDHVHYLMSQLQLLLH</sequence>
<accession>Q9UTR4</accession>
<accession>O94240</accession>
<comment type="function">
    <text>Involved in septation.</text>
</comment>
<feature type="chain" id="PRO_0000087073" description="Septation protein etd1">
    <location>
        <begin position="1"/>
        <end position="391"/>
    </location>
</feature>
<feature type="region of interest" description="Disordered" evidence="1">
    <location>
        <begin position="49"/>
        <end position="68"/>
    </location>
</feature>
<feature type="sequence conflict" description="In Ref. 1; CAA10357." evidence="2" ref="1">
    <original>VGA</original>
    <variation>CRCP</variation>
    <location>
        <begin position="159"/>
        <end position="161"/>
    </location>
</feature>
<keyword id="KW-0131">Cell cycle</keyword>
<keyword id="KW-0132">Cell division</keyword>
<keyword id="KW-1185">Reference proteome</keyword>
<name>ETD1_SCHPO</name>
<dbReference type="EMBL" id="AJ131353">
    <property type="protein sequence ID" value="CAA10357.1"/>
    <property type="molecule type" value="Genomic_DNA"/>
</dbReference>
<dbReference type="EMBL" id="CU329670">
    <property type="protein sequence ID" value="CAB60238.1"/>
    <property type="molecule type" value="Genomic_DNA"/>
</dbReference>
<dbReference type="PIR" id="T43652">
    <property type="entry name" value="T43652"/>
</dbReference>
<dbReference type="PIR" id="T50456">
    <property type="entry name" value="T50456"/>
</dbReference>
<dbReference type="RefSeq" id="NP_594855.1">
    <property type="nucleotide sequence ID" value="NM_001020284.2"/>
</dbReference>
<dbReference type="SMR" id="Q9UTR4"/>
<dbReference type="BioGRID" id="279439">
    <property type="interactions" value="12"/>
</dbReference>
<dbReference type="STRING" id="284812.Q9UTR4"/>
<dbReference type="iPTMnet" id="Q9UTR4"/>
<dbReference type="PaxDb" id="4896-SPAC1006.08.1"/>
<dbReference type="EnsemblFungi" id="SPAC1006.08.1">
    <property type="protein sequence ID" value="SPAC1006.08.1:pep"/>
    <property type="gene ID" value="SPAC1006.08"/>
</dbReference>
<dbReference type="GeneID" id="2543001"/>
<dbReference type="KEGG" id="spo:2543001"/>
<dbReference type="PomBase" id="SPAC1006.08">
    <property type="gene designation" value="etd1"/>
</dbReference>
<dbReference type="VEuPathDB" id="FungiDB:SPAC1006.08"/>
<dbReference type="HOGENOM" id="CLU_706285_0_0_1"/>
<dbReference type="InParanoid" id="Q9UTR4"/>
<dbReference type="PRO" id="PR:Q9UTR4"/>
<dbReference type="Proteomes" id="UP000002485">
    <property type="component" value="Chromosome I"/>
</dbReference>
<dbReference type="GO" id="GO:0051285">
    <property type="term" value="C:cell cortex of cell tip"/>
    <property type="evidence" value="ECO:0000314"/>
    <property type="project" value="PomBase"/>
</dbReference>
<dbReference type="GO" id="GO:0032153">
    <property type="term" value="C:cell division site"/>
    <property type="evidence" value="ECO:0007005"/>
    <property type="project" value="PomBase"/>
</dbReference>
<dbReference type="GO" id="GO:0051286">
    <property type="term" value="C:cell tip"/>
    <property type="evidence" value="ECO:0007005"/>
    <property type="project" value="PomBase"/>
</dbReference>
<dbReference type="GO" id="GO:0005737">
    <property type="term" value="C:cytoplasm"/>
    <property type="evidence" value="ECO:0000269"/>
    <property type="project" value="PomBase"/>
</dbReference>
<dbReference type="GO" id="GO:0005829">
    <property type="term" value="C:cytosol"/>
    <property type="evidence" value="ECO:0007005"/>
    <property type="project" value="PomBase"/>
</dbReference>
<dbReference type="GO" id="GO:0000935">
    <property type="term" value="C:division septum"/>
    <property type="evidence" value="ECO:0000314"/>
    <property type="project" value="PomBase"/>
</dbReference>
<dbReference type="GO" id="GO:0031097">
    <property type="term" value="C:medial cortex"/>
    <property type="evidence" value="ECO:0000314"/>
    <property type="project" value="PomBase"/>
</dbReference>
<dbReference type="GO" id="GO:0005096">
    <property type="term" value="F:GTPase activator activity"/>
    <property type="evidence" value="ECO:0000269"/>
    <property type="project" value="PomBase"/>
</dbReference>
<dbReference type="GO" id="GO:1903473">
    <property type="term" value="P:positive regulation of mitotic actomyosin contractile ring contraction"/>
    <property type="evidence" value="ECO:0000315"/>
    <property type="project" value="PomBase"/>
</dbReference>
<dbReference type="GO" id="GO:1905758">
    <property type="term" value="P:positive regulation of primary cell septum biogenesis"/>
    <property type="evidence" value="ECO:0000315"/>
    <property type="project" value="PomBase"/>
</dbReference>
<dbReference type="GO" id="GO:0031031">
    <property type="term" value="P:positive regulation of septation initiation signaling"/>
    <property type="evidence" value="ECO:0000315"/>
    <property type="project" value="PomBase"/>
</dbReference>
<dbReference type="GO" id="GO:1902412">
    <property type="term" value="P:regulation of mitotic cytokinesis"/>
    <property type="evidence" value="ECO:0000316"/>
    <property type="project" value="PomBase"/>
</dbReference>
<dbReference type="GO" id="GO:0031028">
    <property type="term" value="P:septation initiation signaling"/>
    <property type="evidence" value="ECO:0000315"/>
    <property type="project" value="PomBase"/>
</dbReference>
<dbReference type="InterPro" id="IPR045342">
    <property type="entry name" value="Etd1"/>
</dbReference>
<dbReference type="Pfam" id="PF20162">
    <property type="entry name" value="Etd1"/>
    <property type="match status" value="1"/>
</dbReference>
<proteinExistence type="predicted"/>
<gene>
    <name type="primary">etd1</name>
    <name type="ORF">SPAC1006.08</name>
</gene>
<evidence type="ECO:0000256" key="1">
    <source>
        <dbReference type="SAM" id="MobiDB-lite"/>
    </source>
</evidence>
<evidence type="ECO:0000305" key="2"/>
<protein>
    <recommendedName>
        <fullName>Septation protein etd1</fullName>
    </recommendedName>
</protein>